<protein>
    <recommendedName>
        <fullName evidence="1">Putative transport protein VF_0889</fullName>
    </recommendedName>
</protein>
<organism>
    <name type="scientific">Aliivibrio fischeri (strain ATCC 700601 / ES114)</name>
    <name type="common">Vibrio fischeri</name>
    <dbReference type="NCBI Taxonomy" id="312309"/>
    <lineage>
        <taxon>Bacteria</taxon>
        <taxon>Pseudomonadati</taxon>
        <taxon>Pseudomonadota</taxon>
        <taxon>Gammaproteobacteria</taxon>
        <taxon>Vibrionales</taxon>
        <taxon>Vibrionaceae</taxon>
        <taxon>Aliivibrio</taxon>
    </lineage>
</organism>
<dbReference type="EMBL" id="CP000020">
    <property type="protein sequence ID" value="AAW85384.1"/>
    <property type="molecule type" value="Genomic_DNA"/>
</dbReference>
<dbReference type="RefSeq" id="WP_005418453.1">
    <property type="nucleotide sequence ID" value="NZ_CAWLES010000001.1"/>
</dbReference>
<dbReference type="RefSeq" id="YP_204272.1">
    <property type="nucleotide sequence ID" value="NC_006840.2"/>
</dbReference>
<dbReference type="SMR" id="Q5E6G2"/>
<dbReference type="STRING" id="312309.VF_0889"/>
<dbReference type="EnsemblBacteria" id="AAW85384">
    <property type="protein sequence ID" value="AAW85384"/>
    <property type="gene ID" value="VF_0889"/>
</dbReference>
<dbReference type="GeneID" id="54163557"/>
<dbReference type="KEGG" id="vfi:VF_0889"/>
<dbReference type="PATRIC" id="fig|312309.11.peg.885"/>
<dbReference type="eggNOG" id="COG0569">
    <property type="taxonomic scope" value="Bacteria"/>
</dbReference>
<dbReference type="eggNOG" id="COG2985">
    <property type="taxonomic scope" value="Bacteria"/>
</dbReference>
<dbReference type="HOGENOM" id="CLU_035023_2_2_6"/>
<dbReference type="OrthoDB" id="5166626at2"/>
<dbReference type="Proteomes" id="UP000000537">
    <property type="component" value="Chromosome I"/>
</dbReference>
<dbReference type="GO" id="GO:0005886">
    <property type="term" value="C:plasma membrane"/>
    <property type="evidence" value="ECO:0007669"/>
    <property type="project" value="UniProtKB-SubCell"/>
</dbReference>
<dbReference type="GO" id="GO:0008324">
    <property type="term" value="F:monoatomic cation transmembrane transporter activity"/>
    <property type="evidence" value="ECO:0007669"/>
    <property type="project" value="InterPro"/>
</dbReference>
<dbReference type="GO" id="GO:0006813">
    <property type="term" value="P:potassium ion transport"/>
    <property type="evidence" value="ECO:0007669"/>
    <property type="project" value="InterPro"/>
</dbReference>
<dbReference type="Gene3D" id="3.30.70.1450">
    <property type="entry name" value="Regulator of K+ conductance, C-terminal domain"/>
    <property type="match status" value="2"/>
</dbReference>
<dbReference type="HAMAP" id="MF_01015">
    <property type="entry name" value="YbjL"/>
    <property type="match status" value="1"/>
</dbReference>
<dbReference type="InterPro" id="IPR050144">
    <property type="entry name" value="AAE_transporter"/>
</dbReference>
<dbReference type="InterPro" id="IPR006037">
    <property type="entry name" value="RCK_C"/>
</dbReference>
<dbReference type="InterPro" id="IPR036721">
    <property type="entry name" value="RCK_C_sf"/>
</dbReference>
<dbReference type="InterPro" id="IPR023017">
    <property type="entry name" value="Transp_YbjL_put"/>
</dbReference>
<dbReference type="InterPro" id="IPR006512">
    <property type="entry name" value="YidE_YbjL"/>
</dbReference>
<dbReference type="NCBIfam" id="NF003440">
    <property type="entry name" value="PRK04972.1"/>
    <property type="match status" value="1"/>
</dbReference>
<dbReference type="NCBIfam" id="TIGR01625">
    <property type="entry name" value="YidE_YbjL_dupl"/>
    <property type="match status" value="2"/>
</dbReference>
<dbReference type="PANTHER" id="PTHR30445">
    <property type="entry name" value="K(+)_H(+) ANTIPORTER SUBUNIT KHTT"/>
    <property type="match status" value="1"/>
</dbReference>
<dbReference type="PANTHER" id="PTHR30445:SF10">
    <property type="entry name" value="TRANSPORT PROTEIN YBJL-RELATED"/>
    <property type="match status" value="1"/>
</dbReference>
<dbReference type="Pfam" id="PF06826">
    <property type="entry name" value="Asp-Al_Ex"/>
    <property type="match status" value="2"/>
</dbReference>
<dbReference type="Pfam" id="PF02080">
    <property type="entry name" value="TrkA_C"/>
    <property type="match status" value="2"/>
</dbReference>
<dbReference type="SUPFAM" id="SSF116726">
    <property type="entry name" value="TrkA C-terminal domain-like"/>
    <property type="match status" value="2"/>
</dbReference>
<dbReference type="PROSITE" id="PS51202">
    <property type="entry name" value="RCK_C"/>
    <property type="match status" value="2"/>
</dbReference>
<gene>
    <name type="ordered locus">VF_0889</name>
</gene>
<feature type="chain" id="PRO_0000226890" description="Putative transport protein VF_0889">
    <location>
        <begin position="1"/>
        <end position="560"/>
    </location>
</feature>
<feature type="transmembrane region" description="Helical" evidence="1">
    <location>
        <begin position="8"/>
        <end position="28"/>
    </location>
</feature>
<feature type="transmembrane region" description="Helical" evidence="1">
    <location>
        <begin position="37"/>
        <end position="57"/>
    </location>
</feature>
<feature type="transmembrane region" description="Helical" evidence="1">
    <location>
        <begin position="66"/>
        <end position="86"/>
    </location>
</feature>
<feature type="transmembrane region" description="Helical" evidence="1">
    <location>
        <begin position="94"/>
        <end position="114"/>
    </location>
</feature>
<feature type="transmembrane region" description="Helical" evidence="1">
    <location>
        <begin position="161"/>
        <end position="181"/>
    </location>
</feature>
<feature type="transmembrane region" description="Helical" evidence="1">
    <location>
        <begin position="386"/>
        <end position="406"/>
    </location>
</feature>
<feature type="transmembrane region" description="Helical" evidence="1">
    <location>
        <begin position="409"/>
        <end position="429"/>
    </location>
</feature>
<feature type="transmembrane region" description="Helical" evidence="1">
    <location>
        <begin position="451"/>
        <end position="471"/>
    </location>
</feature>
<feature type="transmembrane region" description="Helical" evidence="1">
    <location>
        <begin position="478"/>
        <end position="498"/>
    </location>
</feature>
<feature type="transmembrane region" description="Helical" evidence="1">
    <location>
        <begin position="539"/>
        <end position="559"/>
    </location>
</feature>
<feature type="domain" description="RCK C-terminal 1" evidence="1">
    <location>
        <begin position="203"/>
        <end position="292"/>
    </location>
</feature>
<feature type="domain" description="RCK C-terminal 2" evidence="1">
    <location>
        <begin position="293"/>
        <end position="376"/>
    </location>
</feature>
<sequence>MNIDVATLLSQNDILLLFVVLALGLFIAKLRIGSFQLGSSIGVLITALFMGSLGYTFTADSLNIGFMLFIFCVGIEAGPNFFGIFLRDGKHYLLLVLVVLVSAVSLSFLTGHYFGLDYGLSTGMMAGALTATPVLVGAKDALNSGLAALPEGVDFSKVIDNLSVGYAFSYLIGLTSLILLARLLPKLQKQNLQDSAMQIAQERGIGSAGQRKVYLPIIRAYRVGQELIDWTDGKNLRELGIHRQTGCHIERIRRNGILANPDGDYILQQGDEIALVGYPDSHARLDSSFRNGKEVFDRNLLDLRIAEEEIVVKSDNIAGKRLSELNLSEYGCFLNRVVRAQIEMPIEHDIVLAKGDILQVSGEKSKVHYLADKIGFISIHSQVSDLLAFCSFFILGIMFGMITMSFGQVTFGLGNAVGLLISGITLGFLRANHPTFGYVPQGALNMTKNLGLLVFMVGIGLSAGGNINEYFSEDGLKVLAAAFIVSVIPVILAYLVGAYILNMNRALLIGAIIGARTCGPAMDVVNEHARSTIPALGYAGTYAIANILMTVAGTIMILLA</sequence>
<comment type="subcellular location">
    <subcellularLocation>
        <location evidence="1">Cell membrane</location>
        <topology evidence="1">Multi-pass membrane protein</topology>
    </subcellularLocation>
</comment>
<comment type="similarity">
    <text evidence="1">Belongs to the AAE transporter (TC 2.A.81) family. YbjL subfamily.</text>
</comment>
<keyword id="KW-1003">Cell membrane</keyword>
<keyword id="KW-0472">Membrane</keyword>
<keyword id="KW-1185">Reference proteome</keyword>
<keyword id="KW-0677">Repeat</keyword>
<keyword id="KW-0812">Transmembrane</keyword>
<keyword id="KW-1133">Transmembrane helix</keyword>
<keyword id="KW-0813">Transport</keyword>
<proteinExistence type="inferred from homology"/>
<accession>Q5E6G2</accession>
<name>Y889_ALIF1</name>
<reference key="1">
    <citation type="journal article" date="2005" name="Proc. Natl. Acad. Sci. U.S.A.">
        <title>Complete genome sequence of Vibrio fischeri: a symbiotic bacterium with pathogenic congeners.</title>
        <authorList>
            <person name="Ruby E.G."/>
            <person name="Urbanowski M."/>
            <person name="Campbell J."/>
            <person name="Dunn A."/>
            <person name="Faini M."/>
            <person name="Gunsalus R."/>
            <person name="Lostroh P."/>
            <person name="Lupp C."/>
            <person name="McCann J."/>
            <person name="Millikan D."/>
            <person name="Schaefer A."/>
            <person name="Stabb E."/>
            <person name="Stevens A."/>
            <person name="Visick K."/>
            <person name="Whistler C."/>
            <person name="Greenberg E.P."/>
        </authorList>
    </citation>
    <scope>NUCLEOTIDE SEQUENCE [LARGE SCALE GENOMIC DNA]</scope>
    <source>
        <strain>ATCC 700601 / ES114</strain>
    </source>
</reference>
<evidence type="ECO:0000255" key="1">
    <source>
        <dbReference type="HAMAP-Rule" id="MF_01015"/>
    </source>
</evidence>